<organism>
    <name type="scientific">Nocardioides sp. (strain ATCC BAA-499 / JS614)</name>
    <dbReference type="NCBI Taxonomy" id="196162"/>
    <lineage>
        <taxon>Bacteria</taxon>
        <taxon>Bacillati</taxon>
        <taxon>Actinomycetota</taxon>
        <taxon>Actinomycetes</taxon>
        <taxon>Propionibacteriales</taxon>
        <taxon>Nocardioidaceae</taxon>
        <taxon>Nocardioides</taxon>
    </lineage>
</organism>
<sequence length="185" mass="18964">MTLPGPEAPGLSEALALIADVPDFPQPGILFKDITPLLAEHAALEAVVAALAAPGRDQTGAPVVDKVLGMESRGFILGAPVALALGVGFVPVRKAGKLPRATYAVSYALEYGEATLEVHQDALEPGDRVLLVDDVLATGGTARATIDLVEKCGASVHAVAILMELGFLPGREALGTVPLTTLLTV</sequence>
<gene>
    <name evidence="1" type="primary">apt</name>
    <name type="ordered locus">Noca_2391</name>
</gene>
<dbReference type="EC" id="2.4.2.7" evidence="1"/>
<dbReference type="EMBL" id="CP000509">
    <property type="protein sequence ID" value="ABL81896.1"/>
    <property type="molecule type" value="Genomic_DNA"/>
</dbReference>
<dbReference type="RefSeq" id="WP_011755837.1">
    <property type="nucleotide sequence ID" value="NC_008699.1"/>
</dbReference>
<dbReference type="SMR" id="A1SJB1"/>
<dbReference type="STRING" id="196162.Noca_2391"/>
<dbReference type="KEGG" id="nca:Noca_2391"/>
<dbReference type="eggNOG" id="COG0503">
    <property type="taxonomic scope" value="Bacteria"/>
</dbReference>
<dbReference type="HOGENOM" id="CLU_063339_3_0_11"/>
<dbReference type="OrthoDB" id="9803963at2"/>
<dbReference type="UniPathway" id="UPA00588">
    <property type="reaction ID" value="UER00646"/>
</dbReference>
<dbReference type="Proteomes" id="UP000000640">
    <property type="component" value="Chromosome"/>
</dbReference>
<dbReference type="GO" id="GO:0005737">
    <property type="term" value="C:cytoplasm"/>
    <property type="evidence" value="ECO:0007669"/>
    <property type="project" value="UniProtKB-SubCell"/>
</dbReference>
<dbReference type="GO" id="GO:0002055">
    <property type="term" value="F:adenine binding"/>
    <property type="evidence" value="ECO:0007669"/>
    <property type="project" value="TreeGrafter"/>
</dbReference>
<dbReference type="GO" id="GO:0003999">
    <property type="term" value="F:adenine phosphoribosyltransferase activity"/>
    <property type="evidence" value="ECO:0007669"/>
    <property type="project" value="UniProtKB-UniRule"/>
</dbReference>
<dbReference type="GO" id="GO:0016208">
    <property type="term" value="F:AMP binding"/>
    <property type="evidence" value="ECO:0007669"/>
    <property type="project" value="TreeGrafter"/>
</dbReference>
<dbReference type="GO" id="GO:0006168">
    <property type="term" value="P:adenine salvage"/>
    <property type="evidence" value="ECO:0007669"/>
    <property type="project" value="InterPro"/>
</dbReference>
<dbReference type="GO" id="GO:0044209">
    <property type="term" value="P:AMP salvage"/>
    <property type="evidence" value="ECO:0007669"/>
    <property type="project" value="UniProtKB-UniRule"/>
</dbReference>
<dbReference type="GO" id="GO:0006166">
    <property type="term" value="P:purine ribonucleoside salvage"/>
    <property type="evidence" value="ECO:0007669"/>
    <property type="project" value="UniProtKB-KW"/>
</dbReference>
<dbReference type="CDD" id="cd06223">
    <property type="entry name" value="PRTases_typeI"/>
    <property type="match status" value="1"/>
</dbReference>
<dbReference type="FunFam" id="3.40.50.2020:FF:000021">
    <property type="entry name" value="Adenine phosphoribosyltransferase"/>
    <property type="match status" value="1"/>
</dbReference>
<dbReference type="Gene3D" id="3.40.50.2020">
    <property type="match status" value="1"/>
</dbReference>
<dbReference type="HAMAP" id="MF_00004">
    <property type="entry name" value="Aden_phosphoribosyltr"/>
    <property type="match status" value="1"/>
</dbReference>
<dbReference type="InterPro" id="IPR005764">
    <property type="entry name" value="Ade_phspho_trans"/>
</dbReference>
<dbReference type="InterPro" id="IPR000836">
    <property type="entry name" value="PRibTrfase_dom"/>
</dbReference>
<dbReference type="InterPro" id="IPR029057">
    <property type="entry name" value="PRTase-like"/>
</dbReference>
<dbReference type="InterPro" id="IPR050054">
    <property type="entry name" value="UPRTase/APRTase"/>
</dbReference>
<dbReference type="NCBIfam" id="TIGR01090">
    <property type="entry name" value="apt"/>
    <property type="match status" value="1"/>
</dbReference>
<dbReference type="NCBIfam" id="NF002634">
    <property type="entry name" value="PRK02304.1-3"/>
    <property type="match status" value="1"/>
</dbReference>
<dbReference type="NCBIfam" id="NF002636">
    <property type="entry name" value="PRK02304.1-5"/>
    <property type="match status" value="1"/>
</dbReference>
<dbReference type="PANTHER" id="PTHR32315">
    <property type="entry name" value="ADENINE PHOSPHORIBOSYLTRANSFERASE"/>
    <property type="match status" value="1"/>
</dbReference>
<dbReference type="PANTHER" id="PTHR32315:SF3">
    <property type="entry name" value="ADENINE PHOSPHORIBOSYLTRANSFERASE"/>
    <property type="match status" value="1"/>
</dbReference>
<dbReference type="Pfam" id="PF00156">
    <property type="entry name" value="Pribosyltran"/>
    <property type="match status" value="1"/>
</dbReference>
<dbReference type="SUPFAM" id="SSF53271">
    <property type="entry name" value="PRTase-like"/>
    <property type="match status" value="1"/>
</dbReference>
<dbReference type="PROSITE" id="PS00103">
    <property type="entry name" value="PUR_PYR_PR_TRANSFER"/>
    <property type="match status" value="1"/>
</dbReference>
<comment type="function">
    <text evidence="1">Catalyzes a salvage reaction resulting in the formation of AMP, that is energically less costly than de novo synthesis.</text>
</comment>
<comment type="catalytic activity">
    <reaction evidence="1">
        <text>AMP + diphosphate = 5-phospho-alpha-D-ribose 1-diphosphate + adenine</text>
        <dbReference type="Rhea" id="RHEA:16609"/>
        <dbReference type="ChEBI" id="CHEBI:16708"/>
        <dbReference type="ChEBI" id="CHEBI:33019"/>
        <dbReference type="ChEBI" id="CHEBI:58017"/>
        <dbReference type="ChEBI" id="CHEBI:456215"/>
        <dbReference type="EC" id="2.4.2.7"/>
    </reaction>
</comment>
<comment type="pathway">
    <text evidence="1">Purine metabolism; AMP biosynthesis via salvage pathway; AMP from adenine: step 1/1.</text>
</comment>
<comment type="subunit">
    <text evidence="1">Homodimer.</text>
</comment>
<comment type="subcellular location">
    <subcellularLocation>
        <location evidence="1">Cytoplasm</location>
    </subcellularLocation>
</comment>
<comment type="similarity">
    <text evidence="1">Belongs to the purine/pyrimidine phosphoribosyltransferase family.</text>
</comment>
<accession>A1SJB1</accession>
<name>APT_NOCSJ</name>
<evidence type="ECO:0000255" key="1">
    <source>
        <dbReference type="HAMAP-Rule" id="MF_00004"/>
    </source>
</evidence>
<reference key="1">
    <citation type="submission" date="2006-12" db="EMBL/GenBank/DDBJ databases">
        <title>Complete sequence of chromosome 1 of Nocardioides sp. JS614.</title>
        <authorList>
            <person name="Copeland A."/>
            <person name="Lucas S."/>
            <person name="Lapidus A."/>
            <person name="Barry K."/>
            <person name="Detter J.C."/>
            <person name="Glavina del Rio T."/>
            <person name="Hammon N."/>
            <person name="Israni S."/>
            <person name="Dalin E."/>
            <person name="Tice H."/>
            <person name="Pitluck S."/>
            <person name="Thompson L.S."/>
            <person name="Brettin T."/>
            <person name="Bruce D."/>
            <person name="Han C."/>
            <person name="Tapia R."/>
            <person name="Schmutz J."/>
            <person name="Larimer F."/>
            <person name="Land M."/>
            <person name="Hauser L."/>
            <person name="Kyrpides N."/>
            <person name="Kim E."/>
            <person name="Mattes T."/>
            <person name="Gossett J."/>
            <person name="Richardson P."/>
        </authorList>
    </citation>
    <scope>NUCLEOTIDE SEQUENCE [LARGE SCALE GENOMIC DNA]</scope>
    <source>
        <strain>ATCC BAA-499 / JS614</strain>
    </source>
</reference>
<protein>
    <recommendedName>
        <fullName evidence="1">Adenine phosphoribosyltransferase</fullName>
        <shortName evidence="1">APRT</shortName>
        <ecNumber evidence="1">2.4.2.7</ecNumber>
    </recommendedName>
</protein>
<proteinExistence type="inferred from homology"/>
<feature type="chain" id="PRO_0000321377" description="Adenine phosphoribosyltransferase">
    <location>
        <begin position="1"/>
        <end position="185"/>
    </location>
</feature>
<keyword id="KW-0963">Cytoplasm</keyword>
<keyword id="KW-0328">Glycosyltransferase</keyword>
<keyword id="KW-0660">Purine salvage</keyword>
<keyword id="KW-1185">Reference proteome</keyword>
<keyword id="KW-0808">Transferase</keyword>